<reference key="1">
    <citation type="journal article" date="2013" name="Cell Host Microbe">
        <title>The Shigella OspC3 effector inhibits caspase-4, antagonizes inflammatory cell death, and promotes epithelial infection.</title>
        <authorList>
            <person name="Kobayashi T."/>
            <person name="Ogawa M."/>
            <person name="Sanada T."/>
            <person name="Mimuro H."/>
            <person name="Kim M."/>
            <person name="Ashida H."/>
            <person name="Akakura R."/>
            <person name="Yoshida M."/>
            <person name="Kawalec M."/>
            <person name="Reichhart J.M."/>
            <person name="Mizushima T."/>
            <person name="Sasakawa C."/>
        </authorList>
    </citation>
    <scope>NUCLEOTIDE SEQUENCE [GENOMIC DNA]</scope>
    <scope>SUBCELLULAR LOCATION</scope>
    <source>
        <strain>YSH6000 / Serotype 2a</strain>
        <plasmid>pMYSH6000</plasmid>
    </source>
</reference>
<reference key="2">
    <citation type="journal article" date="2002" name="Nucleic Acids Res.">
        <title>Genome sequence of Shigella flexneri 2a: insights into pathogenicity through comparison with genomes of Escherichia coli K12 and O157.</title>
        <authorList>
            <person name="Jin Q."/>
            <person name="Yuan Z."/>
            <person name="Xu J."/>
            <person name="Wang Y."/>
            <person name="Shen Y."/>
            <person name="Lu W."/>
            <person name="Wang J."/>
            <person name="Liu H."/>
            <person name="Yang J."/>
            <person name="Yang F."/>
            <person name="Zhang X."/>
            <person name="Zhang J."/>
            <person name="Yang G."/>
            <person name="Wu H."/>
            <person name="Qu D."/>
            <person name="Dong J."/>
            <person name="Sun L."/>
            <person name="Xue Y."/>
            <person name="Zhao A."/>
            <person name="Gao Y."/>
            <person name="Zhu J."/>
            <person name="Kan B."/>
            <person name="Ding K."/>
            <person name="Chen S."/>
            <person name="Cheng H."/>
            <person name="Yao Z."/>
            <person name="He B."/>
            <person name="Chen R."/>
            <person name="Ma D."/>
            <person name="Qiang B."/>
            <person name="Wen Y."/>
            <person name="Hou Y."/>
            <person name="Yu J."/>
        </authorList>
    </citation>
    <scope>NUCLEOTIDE SEQUENCE [LARGE SCALE GENOMIC DNA]</scope>
    <source>
        <strain>301 / Serotype 2a</strain>
        <plasmid>pCP301</plasmid>
    </source>
</reference>
<reference key="3">
    <citation type="journal article" date="2006" name="Infect. Immun.">
        <title>OspF and OspC1 are Shigella flexneri type III secretion system effectors that are required for postinvasion aspects of virulence.</title>
        <authorList>
            <person name="Zurawski D.V."/>
            <person name="Mitsuhata C."/>
            <person name="Mumy K.L."/>
            <person name="McCormick B.A."/>
            <person name="Maurelli A.T."/>
        </authorList>
    </citation>
    <scope>SUBCELLULAR LOCATION</scope>
    <source>
        <strain>ATCC 700930 / 2457T / Serotype 2a</strain>
        <plasmid>pWR100</plasmid>
    </source>
</reference>
<reference key="4">
    <citation type="journal article" date="2020" name="EMBO J.">
        <title>A unique bacterial tactic to circumvent the cell death crosstalk induced by blockade of caspase-8.</title>
        <authorList>
            <person name="Ashida H."/>
            <person name="Sasakawa C."/>
            <person name="Suzuki T."/>
        </authorList>
    </citation>
    <scope>FUNCTION</scope>
    <scope>DISRUPTION PHENOTYPE</scope>
    <source>
        <strain>YSH6000 / Serotype 2a</strain>
    </source>
</reference>
<reference key="5">
    <citation type="journal article" date="2021" name="Nature">
        <title>Shigella evades pyroptosis by arginine ADP-riboxanation of caspase-11.</title>
        <authorList>
            <person name="Li Z."/>
            <person name="Liu W."/>
            <person name="Fu J."/>
            <person name="Cheng S."/>
            <person name="Xu Y."/>
            <person name="Wang Z."/>
            <person name="Liu X."/>
            <person name="Shi X."/>
            <person name="Liu Y."/>
            <person name="Qi X."/>
            <person name="Liu X."/>
            <person name="Ding J."/>
            <person name="Shao F."/>
        </authorList>
    </citation>
    <scope>FUNCTION</scope>
    <scope>CATALYTIC ACTIVITY</scope>
    <source>
        <strain>ATCC 700930 / 2457T / Serotype 2a</strain>
    </source>
</reference>
<reference key="6">
    <citation type="journal article" date="2022" name="Cell">
        <title>A family of conserved bacterial virulence factors dampens interferon responses by blocking calcium signaling.</title>
        <authorList>
            <person name="Alphonse N."/>
            <person name="Wanford J.J."/>
            <person name="Voak A.A."/>
            <person name="Gay J."/>
            <person name="Venkhaya S."/>
            <person name="Burroughs O."/>
            <person name="Mathew S."/>
            <person name="Lee T."/>
            <person name="Evans S.L."/>
            <person name="Zhao W."/>
            <person name="Frowde K."/>
            <person name="Alrehaili A."/>
            <person name="Dickenson R.E."/>
            <person name="Munk M."/>
            <person name="Panina S."/>
            <person name="Mahmood I.F."/>
            <person name="Llorian M."/>
            <person name="Stanifer M.L."/>
            <person name="Boulant S."/>
            <person name="Berchtold M.W."/>
            <person name="Bergeron J.R.C."/>
            <person name="Wack A."/>
            <person name="Lesser C.F."/>
            <person name="Odendall C."/>
        </authorList>
    </citation>
    <scope>FUNCTION</scope>
    <scope>INTERACTION WITH HOST CALMODULIN</scope>
    <scope>MUTAGENESIS OF 320-GLU--HIS-322</scope>
</reference>
<reference key="7">
    <citation type="journal article" date="2022" name="Mol. Cell">
        <title>Pathogen hijacks programmed cell death signaling by arginine ADPR-deacylization of caspases.</title>
        <authorList>
            <person name="Peng T."/>
            <person name="Tao X."/>
            <person name="Xia Z."/>
            <person name="Hu S."/>
            <person name="Xue J."/>
            <person name="Zhu Q."/>
            <person name="Pan X."/>
            <person name="Zhang Q."/>
            <person name="Li S."/>
        </authorList>
    </citation>
    <scope>FUNCTION</scope>
    <scope>CATALYTIC ACTIVITY</scope>
    <scope>MUTAGENESIS OF ASP-172 AND ASP-226</scope>
</reference>
<keyword id="KW-0040">ANK repeat</keyword>
<keyword id="KW-1048">Host nucleus</keyword>
<keyword id="KW-0456">Lyase</keyword>
<keyword id="KW-0520">NAD</keyword>
<keyword id="KW-0614">Plasmid</keyword>
<keyword id="KW-1185">Reference proteome</keyword>
<keyword id="KW-0677">Repeat</keyword>
<keyword id="KW-0964">Secreted</keyword>
<keyword id="KW-0800">Toxin</keyword>
<keyword id="KW-0843">Virulence</keyword>
<evidence type="ECO:0000250" key="1">
    <source>
        <dbReference type="UniProtKB" id="Q7NWF2"/>
    </source>
</evidence>
<evidence type="ECO:0000255" key="2"/>
<evidence type="ECO:0000269" key="3">
    <source>
    </source>
</evidence>
<evidence type="ECO:0000269" key="4">
    <source>
    </source>
</evidence>
<evidence type="ECO:0000269" key="5">
    <source>
    </source>
</evidence>
<evidence type="ECO:0000269" key="6">
    <source>
    </source>
</evidence>
<evidence type="ECO:0000269" key="7">
    <source>
    </source>
</evidence>
<evidence type="ECO:0000269" key="8">
    <source>
    </source>
</evidence>
<evidence type="ECO:0000303" key="9">
    <source>
    </source>
</evidence>
<evidence type="ECO:0000305" key="10"/>
<evidence type="ECO:0000312" key="11">
    <source>
        <dbReference type="EMBL" id="AAL72322.1"/>
    </source>
</evidence>
<proteinExistence type="evidence at protein level"/>
<feature type="chain" id="PRO_0000455082" description="Arginine ADP-riboxanase OspC1">
    <location>
        <begin position="1"/>
        <end position="470"/>
    </location>
</feature>
<feature type="repeat" description="ANK 1" evidence="2">
    <location>
        <begin position="363"/>
        <end position="392"/>
    </location>
</feature>
<feature type="repeat" description="ANK 2" evidence="2">
    <location>
        <begin position="399"/>
        <end position="431"/>
    </location>
</feature>
<feature type="repeat" description="ANK 3" evidence="2">
    <location>
        <begin position="438"/>
        <end position="467"/>
    </location>
</feature>
<feature type="active site" evidence="1">
    <location>
        <position position="320"/>
    </location>
</feature>
<feature type="binding site" evidence="1">
    <location>
        <position position="138"/>
    </location>
    <ligand>
        <name>NAD(+)</name>
        <dbReference type="ChEBI" id="CHEBI:57540"/>
    </ligand>
</feature>
<feature type="binding site" evidence="1">
    <location>
        <position position="139"/>
    </location>
    <ligand>
        <name>NAD(+)</name>
        <dbReference type="ChEBI" id="CHEBI:57540"/>
    </ligand>
</feature>
<feature type="binding site" evidence="1">
    <location>
        <position position="140"/>
    </location>
    <ligand>
        <name>NAD(+)</name>
        <dbReference type="ChEBI" id="CHEBI:57540"/>
    </ligand>
</feature>
<feature type="binding site" evidence="1">
    <location>
        <position position="144"/>
    </location>
    <ligand>
        <name>NAD(+)</name>
        <dbReference type="ChEBI" id="CHEBI:57540"/>
    </ligand>
</feature>
<feature type="binding site" evidence="1">
    <location>
        <position position="157"/>
    </location>
    <ligand>
        <name>NAD(+)</name>
        <dbReference type="ChEBI" id="CHEBI:57540"/>
    </ligand>
</feature>
<feature type="binding site" evidence="1">
    <location>
        <position position="167"/>
    </location>
    <ligand>
        <name>NAD(+)</name>
        <dbReference type="ChEBI" id="CHEBI:57540"/>
    </ligand>
</feature>
<feature type="binding site" evidence="1">
    <location>
        <position position="183"/>
    </location>
    <ligand>
        <name>NAD(+)</name>
        <dbReference type="ChEBI" id="CHEBI:57540"/>
    </ligand>
</feature>
<feature type="binding site" evidence="1">
    <location>
        <position position="201"/>
    </location>
    <ligand>
        <name>NAD(+)</name>
        <dbReference type="ChEBI" id="CHEBI:57540"/>
    </ligand>
</feature>
<feature type="binding site" evidence="1">
    <location>
        <position position="206"/>
    </location>
    <ligand>
        <name>NAD(+)</name>
        <dbReference type="ChEBI" id="CHEBI:57540"/>
    </ligand>
</feature>
<feature type="binding site" evidence="1">
    <location>
        <position position="226"/>
    </location>
    <ligand>
        <name>NAD(+)</name>
        <dbReference type="ChEBI" id="CHEBI:57540"/>
    </ligand>
</feature>
<feature type="binding site" evidence="1">
    <location>
        <position position="320"/>
    </location>
    <ligand>
        <name>NAD(+)</name>
        <dbReference type="ChEBI" id="CHEBI:57540"/>
    </ligand>
</feature>
<feature type="site" description="Important for catalytic activity" evidence="1">
    <location>
        <position position="138"/>
    </location>
</feature>
<feature type="site" description="Important for catalytic activity" evidence="1">
    <location>
        <position position="183"/>
    </location>
</feature>
<feature type="site" description="Important for catalytic activity" evidence="1">
    <location>
        <position position="206"/>
    </location>
</feature>
<feature type="site" description="Important for catalytic activity" evidence="1">
    <location>
        <position position="226"/>
    </location>
</feature>
<feature type="mutagenesis site" description="Abolished ADP-riboxanase activity and ability to inhibit host cell caspases." evidence="7">
    <original>D</original>
    <variation>A</variation>
    <location>
        <position position="172"/>
    </location>
</feature>
<feature type="mutagenesis site" description="Abolished ADP-riboxanase activity and ability to inhibit host cell caspases." evidence="7">
    <original>D</original>
    <variation>A</variation>
    <location>
        <position position="226"/>
    </location>
</feature>
<feature type="mutagenesis site" description="Abolished arginine ADP-riboxanation without affecting ability to inhibit host calmodulin." evidence="8">
    <original>EYH</original>
    <variation>AYA</variation>
    <location>
        <begin position="320"/>
        <end position="322"/>
    </location>
</feature>
<protein>
    <recommendedName>
        <fullName evidence="10">Arginine ADP-riboxanase OspC1</fullName>
        <ecNumber evidence="6 7">4.3.99.-</ecNumber>
    </recommendedName>
</protein>
<sequence length="470" mass="53946">MNISETLNSANTQCNIDSMDNRLHTLFPKVTSVRNAAQQTMPDEKNLKDSANIIKSFFRKTIAAQSYSRMFSQGSNFKSLNIAIDAPSDAKASFKAIEHLDRLSKHYISEIREKLHPLSAEELNLLSLIINSDLIFRHQSNSDLSDKILNIKSFNKIQSEGICTKRNTYADDIKKIANHDFVFFGVEISNHQKKHPLNTKHHTVDFGANAYIIDHDSPYGYMTLTDHFDNAIPPVFYHEHQSFLDKFSEVNKEVSRYVHGSKGIIDVPIFNTKDMKLGLGLYLIDFIRKSEDQSFKEFCYGKNLAPVDLDRIINFVFQPEYHIPRMVSTENFKKVKIREISLEEAVTASNYEEINKQVTNKKIALQALFLSITNQKEDVALYILSNFEITRQDVISIKHELYDIEYLLSAHNSSCKVLEYFINKGLVDVNTKFKKTNSGDCMLDNAIKYENAEMIKLLLKYGATSDNKYI</sequence>
<name>OSPC1_SHIFL</name>
<organism>
    <name type="scientific">Shigella flexneri</name>
    <dbReference type="NCBI Taxonomy" id="623"/>
    <lineage>
        <taxon>Bacteria</taxon>
        <taxon>Pseudomonadati</taxon>
        <taxon>Pseudomonadota</taxon>
        <taxon>Gammaproteobacteria</taxon>
        <taxon>Enterobacterales</taxon>
        <taxon>Enterobacteriaceae</taxon>
        <taxon>Shigella</taxon>
    </lineage>
</organism>
<comment type="function">
    <text evidence="5 6 7 8">ADP-riboxanase effector that mediates arginine ADP-riboxanation of host caspases (PubMed:34671164, PubMed:35338844). ADP-riboxanation of host apoptotic caspases (CASP3, CASP8 and CASP9) prevents their activation, thereby inhibiting host cell extrinsic and intrinsic apoptosis (PubMed:32657447, PubMed:35338844). Does not catalyze ADP-riboxanation of host CASP4/CASP11 (PubMed:34671164). Independently of its ADP-riboxanase activity, acts as an inhibitor of calcium signaling by inhibiting host calmodulin, preventing activation of the JAK-STAT signaling pathway in response to interferon-beta (PubMed:35568036). Mechanistically, acts by binding to the apo form of calmodulin, preventing calcium-binding and ability to activate host CaMK2 (CAMKII), which is required to stimulate the JAK-STAT signaling pathway in response to interferon-beta (PubMed:35568036).</text>
</comment>
<comment type="catalytic activity">
    <reaction evidence="6 7">
        <text>L-arginyl-[protein] + NAD(+) = ADP-riboxanated L-argininyl-[protein] + nicotinamide + NH4(+) + H(+)</text>
        <dbReference type="Rhea" id="RHEA:69500"/>
        <dbReference type="Rhea" id="RHEA-COMP:10532"/>
        <dbReference type="Rhea" id="RHEA-COMP:17719"/>
        <dbReference type="ChEBI" id="CHEBI:15378"/>
        <dbReference type="ChEBI" id="CHEBI:17154"/>
        <dbReference type="ChEBI" id="CHEBI:28938"/>
        <dbReference type="ChEBI" id="CHEBI:29965"/>
        <dbReference type="ChEBI" id="CHEBI:57540"/>
        <dbReference type="ChEBI" id="CHEBI:184300"/>
    </reaction>
    <physiologicalReaction direction="left-to-right" evidence="6 7">
        <dbReference type="Rhea" id="RHEA:69501"/>
    </physiologicalReaction>
</comment>
<comment type="subunit">
    <text evidence="8">Interacts with host calmodulin (CALM1, CALM2 and/or CALM3); specifically interacts with the apo form of calmodulin, preventing calcium-binding.</text>
</comment>
<comment type="subcellular location">
    <subcellularLocation>
        <location evidence="3 4">Secreted</location>
    </subcellularLocation>
    <subcellularLocation>
        <location evidence="3">Host nucleus</location>
    </subcellularLocation>
    <text evidence="3 4">Secreted via the type III secretion system (T3SS).</text>
</comment>
<comment type="disruption phenotype">
    <text evidence="5">Host cells display apoptosis caused by strongly increased CASP8 activation.</text>
</comment>
<comment type="similarity">
    <text evidence="10">Belongs to the OspC family.</text>
</comment>
<accession>Q8VSJ7</accession>
<accession>A0A2S4MRB8</accession>
<geneLocation type="plasmid">
    <name>pCP301</name>
</geneLocation>
<geneLocation type="plasmid">
    <name>pMYSH6000</name>
</geneLocation>
<geneLocation type="plasmid">
    <name>pWR100</name>
</geneLocation>
<dbReference type="EC" id="4.3.99.-" evidence="6 7"/>
<dbReference type="EMBL" id="AB819725">
    <property type="protein sequence ID" value="BAN28453.1"/>
    <property type="molecule type" value="Genomic_DNA"/>
</dbReference>
<dbReference type="EMBL" id="AF386526">
    <property type="protein sequence ID" value="AAL72322.1"/>
    <property type="molecule type" value="Genomic_DNA"/>
</dbReference>
<dbReference type="RefSeq" id="NP_858227.1">
    <property type="nucleotide sequence ID" value="NC_004851.1"/>
</dbReference>
<dbReference type="RefSeq" id="WP_001026857.1">
    <property type="nucleotide sequence ID" value="NZ_WPGS01000178.1"/>
</dbReference>
<dbReference type="SMR" id="Q8VSJ7"/>
<dbReference type="PaxDb" id="198214-CP0094"/>
<dbReference type="GeneID" id="1238025"/>
<dbReference type="KEGG" id="sfl:CP0094"/>
<dbReference type="PATRIC" id="fig|198214.7.peg.5347"/>
<dbReference type="HOGENOM" id="CLU_053336_0_0_6"/>
<dbReference type="OMA" id="SIANQKE"/>
<dbReference type="Proteomes" id="UP000001006">
    <property type="component" value="Plasmid pCP301"/>
</dbReference>
<dbReference type="GO" id="GO:0005576">
    <property type="term" value="C:extracellular region"/>
    <property type="evidence" value="ECO:0007669"/>
    <property type="project" value="UniProtKB-SubCell"/>
</dbReference>
<dbReference type="GO" id="GO:0030430">
    <property type="term" value="C:host cell cytoplasm"/>
    <property type="evidence" value="ECO:0000314"/>
    <property type="project" value="UniProt"/>
</dbReference>
<dbReference type="GO" id="GO:0042025">
    <property type="term" value="C:host cell nucleus"/>
    <property type="evidence" value="ECO:0007669"/>
    <property type="project" value="UniProtKB-SubCell"/>
</dbReference>
<dbReference type="GO" id="GO:0140740">
    <property type="term" value="F:ADP-riboxanase activity"/>
    <property type="evidence" value="ECO:0000314"/>
    <property type="project" value="UniProtKB"/>
</dbReference>
<dbReference type="GO" id="GO:0005516">
    <property type="term" value="F:calmodulin binding"/>
    <property type="evidence" value="ECO:0000314"/>
    <property type="project" value="UniProtKB"/>
</dbReference>
<dbReference type="GO" id="GO:0090729">
    <property type="term" value="F:toxin activity"/>
    <property type="evidence" value="ECO:0007669"/>
    <property type="project" value="UniProtKB-KW"/>
</dbReference>
<dbReference type="GO" id="GO:0075135">
    <property type="term" value="P:symbiont-mediated suppression of host calcium-mediated signal transduction"/>
    <property type="evidence" value="ECO:0000314"/>
    <property type="project" value="UniProtKB"/>
</dbReference>
<dbReference type="GO" id="GO:0052041">
    <property type="term" value="P:symbiont-mediated suppression of host programmed cell death"/>
    <property type="evidence" value="ECO:0000314"/>
    <property type="project" value="UniProtKB"/>
</dbReference>
<dbReference type="GO" id="GO:0052029">
    <property type="term" value="P:symbiont-mediated suppression of host signal transduction pathway"/>
    <property type="evidence" value="ECO:0000314"/>
    <property type="project" value="UniProtKB"/>
</dbReference>
<dbReference type="Gene3D" id="1.25.40.20">
    <property type="entry name" value="Ankyrin repeat-containing domain"/>
    <property type="match status" value="1"/>
</dbReference>
<dbReference type="InterPro" id="IPR036770">
    <property type="entry name" value="Ankyrin_rpt-contain_sf"/>
</dbReference>
<dbReference type="InterPro" id="IPR010366">
    <property type="entry name" value="OspC1-4"/>
</dbReference>
<dbReference type="Pfam" id="PF06128">
    <property type="entry name" value="Shigella_OspC"/>
    <property type="match status" value="1"/>
</dbReference>
<dbReference type="SUPFAM" id="SSF48403">
    <property type="entry name" value="Ankyrin repeat"/>
    <property type="match status" value="1"/>
</dbReference>
<gene>
    <name evidence="9" type="primary">ospC1</name>
    <name evidence="11" type="ordered locus">CP0094</name>
    <name evidence="11" type="ORF">SF_p0094</name>
</gene>